<keyword id="KW-0004">4Fe-4S</keyword>
<keyword id="KW-0067">ATP-binding</keyword>
<keyword id="KW-0963">Cytoplasm</keyword>
<keyword id="KW-0408">Iron</keyword>
<keyword id="KW-0411">Iron-sulfur</keyword>
<keyword id="KW-0460">Magnesium</keyword>
<keyword id="KW-0479">Metal-binding</keyword>
<keyword id="KW-0547">Nucleotide-binding</keyword>
<keyword id="KW-0694">RNA-binding</keyword>
<keyword id="KW-0808">Transferase</keyword>
<keyword id="KW-0819">tRNA processing</keyword>
<keyword id="KW-0820">tRNA-binding</keyword>
<name>TTCA_BURM9</name>
<organism>
    <name type="scientific">Burkholderia mallei (strain NCTC 10229)</name>
    <dbReference type="NCBI Taxonomy" id="412022"/>
    <lineage>
        <taxon>Bacteria</taxon>
        <taxon>Pseudomonadati</taxon>
        <taxon>Pseudomonadota</taxon>
        <taxon>Betaproteobacteria</taxon>
        <taxon>Burkholderiales</taxon>
        <taxon>Burkholderiaceae</taxon>
        <taxon>Burkholderia</taxon>
        <taxon>pseudomallei group</taxon>
    </lineage>
</organism>
<sequence length="331" mass="36719">MNAPHTPHLNEAEAAAAVEANAAELGRRALTRREQKEAYENNKLFKRLVRQVGQAIGDYNMIEHGDKVMVCLSGGKDSYALLDILLRLRERAPIDFDIVAVNLDQKQPGFPEHVLPEYLTKIGVPFHIENQDTYSIVKRLVPEGKTTCSLCSRLRRGILYRVAGELGATKIALGHHRDDIVQTLLLNMFYGGKLKGMPPKLQSDDGKNIVIRPLAYAKETDLEKYAELREFPIIPCNLCGSQPNLKRAEMKALIRDWDKRFPGRVDNMFNALANVVPSHLMDARLFPFAGLRATGEADPNGDIAFDEDPCGTDASAPGGAKSVSIVQFDDL</sequence>
<reference key="1">
    <citation type="journal article" date="2010" name="Genome Biol. Evol.">
        <title>Continuing evolution of Burkholderia mallei through genome reduction and large-scale rearrangements.</title>
        <authorList>
            <person name="Losada L."/>
            <person name="Ronning C.M."/>
            <person name="DeShazer D."/>
            <person name="Woods D."/>
            <person name="Fedorova N."/>
            <person name="Kim H.S."/>
            <person name="Shabalina S.A."/>
            <person name="Pearson T.R."/>
            <person name="Brinkac L."/>
            <person name="Tan P."/>
            <person name="Nandi T."/>
            <person name="Crabtree J."/>
            <person name="Badger J."/>
            <person name="Beckstrom-Sternberg S."/>
            <person name="Saqib M."/>
            <person name="Schutzer S.E."/>
            <person name="Keim P."/>
            <person name="Nierman W.C."/>
        </authorList>
    </citation>
    <scope>NUCLEOTIDE SEQUENCE [LARGE SCALE GENOMIC DNA]</scope>
    <source>
        <strain>NCTC 10229</strain>
    </source>
</reference>
<gene>
    <name evidence="1" type="primary">ttcA</name>
    <name type="ordered locus">BMA10229_A2039</name>
</gene>
<comment type="function">
    <text evidence="1">Catalyzes the ATP-dependent 2-thiolation of cytidine in position 32 of tRNA, to form 2-thiocytidine (s(2)C32). The sulfur atoms are provided by the cysteine/cysteine desulfurase (IscS) system.</text>
</comment>
<comment type="catalytic activity">
    <reaction evidence="1">
        <text>cytidine(32) in tRNA + S-sulfanyl-L-cysteinyl-[cysteine desulfurase] + AH2 + ATP = 2-thiocytidine(32) in tRNA + L-cysteinyl-[cysteine desulfurase] + A + AMP + diphosphate + H(+)</text>
        <dbReference type="Rhea" id="RHEA:57048"/>
        <dbReference type="Rhea" id="RHEA-COMP:10288"/>
        <dbReference type="Rhea" id="RHEA-COMP:12157"/>
        <dbReference type="Rhea" id="RHEA-COMP:12158"/>
        <dbReference type="Rhea" id="RHEA-COMP:14821"/>
        <dbReference type="ChEBI" id="CHEBI:13193"/>
        <dbReference type="ChEBI" id="CHEBI:15378"/>
        <dbReference type="ChEBI" id="CHEBI:17499"/>
        <dbReference type="ChEBI" id="CHEBI:29950"/>
        <dbReference type="ChEBI" id="CHEBI:30616"/>
        <dbReference type="ChEBI" id="CHEBI:33019"/>
        <dbReference type="ChEBI" id="CHEBI:61963"/>
        <dbReference type="ChEBI" id="CHEBI:82748"/>
        <dbReference type="ChEBI" id="CHEBI:141453"/>
        <dbReference type="ChEBI" id="CHEBI:456215"/>
    </reaction>
    <physiologicalReaction direction="left-to-right" evidence="1">
        <dbReference type="Rhea" id="RHEA:57049"/>
    </physiologicalReaction>
</comment>
<comment type="cofactor">
    <cofactor evidence="1">
        <name>Mg(2+)</name>
        <dbReference type="ChEBI" id="CHEBI:18420"/>
    </cofactor>
</comment>
<comment type="cofactor">
    <cofactor evidence="1">
        <name>[4Fe-4S] cluster</name>
        <dbReference type="ChEBI" id="CHEBI:49883"/>
    </cofactor>
    <text evidence="1">Binds 1 [4Fe-4S] cluster per subunit. The cluster is chelated by three Cys residues, the fourth Fe has a free coordination site that may bind a sulfur atom transferred from the persulfide of IscS.</text>
</comment>
<comment type="pathway">
    <text evidence="1">tRNA modification.</text>
</comment>
<comment type="subunit">
    <text evidence="1">Homodimer.</text>
</comment>
<comment type="subcellular location">
    <subcellularLocation>
        <location evidence="1">Cytoplasm</location>
    </subcellularLocation>
</comment>
<comment type="miscellaneous">
    <text evidence="1">The thiolation reaction likely consists of two steps: a first activation step by ATP to form an adenylated intermediate of the target base of tRNA, and a second nucleophilic substitution step of the sulfur (S) atom supplied by the hydrosulfide attached to the Fe-S cluster.</text>
</comment>
<comment type="similarity">
    <text evidence="1">Belongs to the TtcA family.</text>
</comment>
<dbReference type="EC" id="2.8.1.-" evidence="1"/>
<dbReference type="EMBL" id="CP000546">
    <property type="protein sequence ID" value="ABN03934.1"/>
    <property type="molecule type" value="Genomic_DNA"/>
</dbReference>
<dbReference type="RefSeq" id="WP_004189298.1">
    <property type="nucleotide sequence ID" value="NC_008836.1"/>
</dbReference>
<dbReference type="SMR" id="A2S7T4"/>
<dbReference type="GeneID" id="93058831"/>
<dbReference type="KEGG" id="bml:BMA10229_A2039"/>
<dbReference type="HOGENOM" id="CLU_026481_0_0_4"/>
<dbReference type="Proteomes" id="UP000002283">
    <property type="component" value="Chromosome I"/>
</dbReference>
<dbReference type="GO" id="GO:0005737">
    <property type="term" value="C:cytoplasm"/>
    <property type="evidence" value="ECO:0007669"/>
    <property type="project" value="UniProtKB-SubCell"/>
</dbReference>
<dbReference type="GO" id="GO:0051539">
    <property type="term" value="F:4 iron, 4 sulfur cluster binding"/>
    <property type="evidence" value="ECO:0007669"/>
    <property type="project" value="UniProtKB-UniRule"/>
</dbReference>
<dbReference type="GO" id="GO:0005524">
    <property type="term" value="F:ATP binding"/>
    <property type="evidence" value="ECO:0007669"/>
    <property type="project" value="UniProtKB-UniRule"/>
</dbReference>
<dbReference type="GO" id="GO:0000287">
    <property type="term" value="F:magnesium ion binding"/>
    <property type="evidence" value="ECO:0007669"/>
    <property type="project" value="UniProtKB-UniRule"/>
</dbReference>
<dbReference type="GO" id="GO:0016783">
    <property type="term" value="F:sulfurtransferase activity"/>
    <property type="evidence" value="ECO:0007669"/>
    <property type="project" value="UniProtKB-UniRule"/>
</dbReference>
<dbReference type="GO" id="GO:0000049">
    <property type="term" value="F:tRNA binding"/>
    <property type="evidence" value="ECO:0007669"/>
    <property type="project" value="UniProtKB-KW"/>
</dbReference>
<dbReference type="GO" id="GO:0034227">
    <property type="term" value="P:tRNA thio-modification"/>
    <property type="evidence" value="ECO:0007669"/>
    <property type="project" value="UniProtKB-UniRule"/>
</dbReference>
<dbReference type="CDD" id="cd24138">
    <property type="entry name" value="TtcA-like"/>
    <property type="match status" value="1"/>
</dbReference>
<dbReference type="Gene3D" id="3.40.50.620">
    <property type="entry name" value="HUPs"/>
    <property type="match status" value="1"/>
</dbReference>
<dbReference type="HAMAP" id="MF_01850">
    <property type="entry name" value="TtcA"/>
    <property type="match status" value="1"/>
</dbReference>
<dbReference type="InterPro" id="IPR014729">
    <property type="entry name" value="Rossmann-like_a/b/a_fold"/>
</dbReference>
<dbReference type="InterPro" id="IPR011063">
    <property type="entry name" value="TilS/TtcA_N"/>
</dbReference>
<dbReference type="InterPro" id="IPR012089">
    <property type="entry name" value="tRNA_Cyd_32_2_STrfase"/>
</dbReference>
<dbReference type="NCBIfam" id="NF007972">
    <property type="entry name" value="PRK10696.1"/>
    <property type="match status" value="1"/>
</dbReference>
<dbReference type="PANTHER" id="PTHR43686:SF1">
    <property type="entry name" value="AMINOTRAN_5 DOMAIN-CONTAINING PROTEIN"/>
    <property type="match status" value="1"/>
</dbReference>
<dbReference type="PANTHER" id="PTHR43686">
    <property type="entry name" value="SULFURTRANSFERASE-RELATED"/>
    <property type="match status" value="1"/>
</dbReference>
<dbReference type="Pfam" id="PF01171">
    <property type="entry name" value="ATP_bind_3"/>
    <property type="match status" value="1"/>
</dbReference>
<dbReference type="SUPFAM" id="SSF52402">
    <property type="entry name" value="Adenine nucleotide alpha hydrolases-like"/>
    <property type="match status" value="1"/>
</dbReference>
<evidence type="ECO:0000255" key="1">
    <source>
        <dbReference type="HAMAP-Rule" id="MF_01850"/>
    </source>
</evidence>
<accession>A2S7T4</accession>
<proteinExistence type="inferred from homology"/>
<protein>
    <recommendedName>
        <fullName evidence="1">tRNA-cytidine(32) 2-sulfurtransferase</fullName>
        <ecNumber evidence="1">2.8.1.-</ecNumber>
    </recommendedName>
    <alternativeName>
        <fullName evidence="1">Two-thiocytidine biosynthesis protein A</fullName>
    </alternativeName>
    <alternativeName>
        <fullName evidence="1">tRNA 2-thiocytidine biosynthesis protein TtcA</fullName>
    </alternativeName>
</protein>
<feature type="chain" id="PRO_0000348685" description="tRNA-cytidine(32) 2-sulfurtransferase">
    <location>
        <begin position="1"/>
        <end position="331"/>
    </location>
</feature>
<feature type="short sequence motif" description="PP-loop motif" evidence="1">
    <location>
        <begin position="73"/>
        <end position="78"/>
    </location>
</feature>
<feature type="binding site" evidence="1">
    <location>
        <position position="148"/>
    </location>
    <ligand>
        <name>[4Fe-4S] cluster</name>
        <dbReference type="ChEBI" id="CHEBI:49883"/>
    </ligand>
</feature>
<feature type="binding site" evidence="1">
    <location>
        <position position="151"/>
    </location>
    <ligand>
        <name>[4Fe-4S] cluster</name>
        <dbReference type="ChEBI" id="CHEBI:49883"/>
    </ligand>
</feature>
<feature type="binding site" evidence="1">
    <location>
        <position position="239"/>
    </location>
    <ligand>
        <name>[4Fe-4S] cluster</name>
        <dbReference type="ChEBI" id="CHEBI:49883"/>
    </ligand>
</feature>